<dbReference type="EC" id="2.2.1.7" evidence="1"/>
<dbReference type="EMBL" id="FM954972">
    <property type="protein sequence ID" value="CAV19565.1"/>
    <property type="molecule type" value="Genomic_DNA"/>
</dbReference>
<dbReference type="SMR" id="B7VJA1"/>
<dbReference type="STRING" id="575788.VS_2406"/>
<dbReference type="KEGG" id="vsp:VS_2406"/>
<dbReference type="PATRIC" id="fig|575788.5.peg.3668"/>
<dbReference type="eggNOG" id="COG1154">
    <property type="taxonomic scope" value="Bacteria"/>
</dbReference>
<dbReference type="HOGENOM" id="CLU_009227_1_4_6"/>
<dbReference type="UniPathway" id="UPA00064">
    <property type="reaction ID" value="UER00091"/>
</dbReference>
<dbReference type="Proteomes" id="UP000009100">
    <property type="component" value="Chromosome 1"/>
</dbReference>
<dbReference type="GO" id="GO:0005829">
    <property type="term" value="C:cytosol"/>
    <property type="evidence" value="ECO:0007669"/>
    <property type="project" value="TreeGrafter"/>
</dbReference>
<dbReference type="GO" id="GO:0008661">
    <property type="term" value="F:1-deoxy-D-xylulose-5-phosphate synthase activity"/>
    <property type="evidence" value="ECO:0007669"/>
    <property type="project" value="UniProtKB-UniRule"/>
</dbReference>
<dbReference type="GO" id="GO:0000287">
    <property type="term" value="F:magnesium ion binding"/>
    <property type="evidence" value="ECO:0007669"/>
    <property type="project" value="UniProtKB-UniRule"/>
</dbReference>
<dbReference type="GO" id="GO:0030976">
    <property type="term" value="F:thiamine pyrophosphate binding"/>
    <property type="evidence" value="ECO:0007669"/>
    <property type="project" value="UniProtKB-UniRule"/>
</dbReference>
<dbReference type="GO" id="GO:0052865">
    <property type="term" value="P:1-deoxy-D-xylulose 5-phosphate biosynthetic process"/>
    <property type="evidence" value="ECO:0007669"/>
    <property type="project" value="UniProtKB-UniPathway"/>
</dbReference>
<dbReference type="GO" id="GO:0019288">
    <property type="term" value="P:isopentenyl diphosphate biosynthetic process, methylerythritol 4-phosphate pathway"/>
    <property type="evidence" value="ECO:0007669"/>
    <property type="project" value="TreeGrafter"/>
</dbReference>
<dbReference type="GO" id="GO:0016114">
    <property type="term" value="P:terpenoid biosynthetic process"/>
    <property type="evidence" value="ECO:0007669"/>
    <property type="project" value="UniProtKB-UniRule"/>
</dbReference>
<dbReference type="GO" id="GO:0009228">
    <property type="term" value="P:thiamine biosynthetic process"/>
    <property type="evidence" value="ECO:0007669"/>
    <property type="project" value="UniProtKB-UniRule"/>
</dbReference>
<dbReference type="CDD" id="cd02007">
    <property type="entry name" value="TPP_DXS"/>
    <property type="match status" value="1"/>
</dbReference>
<dbReference type="CDD" id="cd07033">
    <property type="entry name" value="TPP_PYR_DXS_TK_like"/>
    <property type="match status" value="1"/>
</dbReference>
<dbReference type="FunFam" id="3.40.50.920:FF:000002">
    <property type="entry name" value="1-deoxy-D-xylulose-5-phosphate synthase"/>
    <property type="match status" value="1"/>
</dbReference>
<dbReference type="FunFam" id="3.40.50.970:FF:000005">
    <property type="entry name" value="1-deoxy-D-xylulose-5-phosphate synthase"/>
    <property type="match status" value="1"/>
</dbReference>
<dbReference type="Gene3D" id="3.40.50.920">
    <property type="match status" value="1"/>
</dbReference>
<dbReference type="Gene3D" id="3.40.50.970">
    <property type="match status" value="2"/>
</dbReference>
<dbReference type="HAMAP" id="MF_00315">
    <property type="entry name" value="DXP_synth"/>
    <property type="match status" value="1"/>
</dbReference>
<dbReference type="InterPro" id="IPR005477">
    <property type="entry name" value="Dxylulose-5-P_synthase"/>
</dbReference>
<dbReference type="InterPro" id="IPR029061">
    <property type="entry name" value="THDP-binding"/>
</dbReference>
<dbReference type="InterPro" id="IPR009014">
    <property type="entry name" value="Transketo_C/PFOR_II"/>
</dbReference>
<dbReference type="InterPro" id="IPR005475">
    <property type="entry name" value="Transketolase-like_Pyr-bd"/>
</dbReference>
<dbReference type="InterPro" id="IPR020826">
    <property type="entry name" value="Transketolase_BS"/>
</dbReference>
<dbReference type="InterPro" id="IPR033248">
    <property type="entry name" value="Transketolase_C"/>
</dbReference>
<dbReference type="InterPro" id="IPR049557">
    <property type="entry name" value="Transketolase_CS"/>
</dbReference>
<dbReference type="NCBIfam" id="TIGR00204">
    <property type="entry name" value="dxs"/>
    <property type="match status" value="1"/>
</dbReference>
<dbReference type="NCBIfam" id="NF003933">
    <property type="entry name" value="PRK05444.2-2"/>
    <property type="match status" value="1"/>
</dbReference>
<dbReference type="PANTHER" id="PTHR43322">
    <property type="entry name" value="1-D-DEOXYXYLULOSE 5-PHOSPHATE SYNTHASE-RELATED"/>
    <property type="match status" value="1"/>
</dbReference>
<dbReference type="PANTHER" id="PTHR43322:SF5">
    <property type="entry name" value="1-DEOXY-D-XYLULOSE-5-PHOSPHATE SYNTHASE, CHLOROPLASTIC"/>
    <property type="match status" value="1"/>
</dbReference>
<dbReference type="Pfam" id="PF13292">
    <property type="entry name" value="DXP_synthase_N"/>
    <property type="match status" value="1"/>
</dbReference>
<dbReference type="Pfam" id="PF02779">
    <property type="entry name" value="Transket_pyr"/>
    <property type="match status" value="1"/>
</dbReference>
<dbReference type="Pfam" id="PF02780">
    <property type="entry name" value="Transketolase_C"/>
    <property type="match status" value="1"/>
</dbReference>
<dbReference type="SMART" id="SM00861">
    <property type="entry name" value="Transket_pyr"/>
    <property type="match status" value="1"/>
</dbReference>
<dbReference type="SUPFAM" id="SSF52518">
    <property type="entry name" value="Thiamin diphosphate-binding fold (THDP-binding)"/>
    <property type="match status" value="2"/>
</dbReference>
<dbReference type="SUPFAM" id="SSF52922">
    <property type="entry name" value="TK C-terminal domain-like"/>
    <property type="match status" value="1"/>
</dbReference>
<dbReference type="PROSITE" id="PS00801">
    <property type="entry name" value="TRANSKETOLASE_1"/>
    <property type="match status" value="1"/>
</dbReference>
<dbReference type="PROSITE" id="PS00802">
    <property type="entry name" value="TRANSKETOLASE_2"/>
    <property type="match status" value="1"/>
</dbReference>
<sequence>MTLDISKYPTLALADKPEDLRLLPKETLTQLCDELRTYLLNSVSQSSGHLASGLGTVELTVALHYVYNTPFDQLVWDVGHQAYPHKILTGRRDRLSTIRQKDGLHPFPWREESEYDTLSVGHSSTSISAALGMAISAKKEGKNRKVVSVIGDGAITAGMAFEAMNHAGDIHNDMLVILNDNEMSISENVGALNNHLAQVLSGSLYTSIREGGKKVLSGVPPIKELVRRTEEHLKGMVVPGTMFEELGFNYIGPVDGHDVNELIKTLKNMRDLKGPQFLHIMTKKGKGYEPAEKDPIGYHGVPKFDPAHSSLPKSTSSKPTFSKIFGDFLCDMAAQDPKLMAITPAMREGSGMVRFSKEYPKQYFDVAIAEQHAVTLATGMAIAGDKPIVAIYSTFLQRGYDQLIHDVAIMDLPVMFAIDRAGLVGADGQTHQGAFDLSFMRCIPNMVIMAPSDENECRQMLYTGHQHTGPSAVRYPRGNGMGTEIQSEFTALEIGKGRIVRESKKAKDGSKVAILSFGTFLESALQTADAIDATVADMRFVKPLDEALIKQLAADHDVLVTIEENAIAGGAGAGVIEFLMQEKLLMPVLNLGLPDKFIAQGTQDELHEELGLDAKGIEKSISDYLAK</sequence>
<feature type="chain" id="PRO_1000132948" description="1-deoxy-D-xylulose-5-phosphate synthase">
    <location>
        <begin position="1"/>
        <end position="627"/>
    </location>
</feature>
<feature type="binding site" evidence="1">
    <location>
        <position position="80"/>
    </location>
    <ligand>
        <name>thiamine diphosphate</name>
        <dbReference type="ChEBI" id="CHEBI:58937"/>
    </ligand>
</feature>
<feature type="binding site" evidence="1">
    <location>
        <begin position="121"/>
        <end position="123"/>
    </location>
    <ligand>
        <name>thiamine diphosphate</name>
        <dbReference type="ChEBI" id="CHEBI:58937"/>
    </ligand>
</feature>
<feature type="binding site" evidence="1">
    <location>
        <position position="152"/>
    </location>
    <ligand>
        <name>Mg(2+)</name>
        <dbReference type="ChEBI" id="CHEBI:18420"/>
    </ligand>
</feature>
<feature type="binding site" evidence="1">
    <location>
        <begin position="153"/>
        <end position="154"/>
    </location>
    <ligand>
        <name>thiamine diphosphate</name>
        <dbReference type="ChEBI" id="CHEBI:58937"/>
    </ligand>
</feature>
<feature type="binding site" evidence="1">
    <location>
        <position position="181"/>
    </location>
    <ligand>
        <name>Mg(2+)</name>
        <dbReference type="ChEBI" id="CHEBI:18420"/>
    </ligand>
</feature>
<feature type="binding site" evidence="1">
    <location>
        <position position="181"/>
    </location>
    <ligand>
        <name>thiamine diphosphate</name>
        <dbReference type="ChEBI" id="CHEBI:58937"/>
    </ligand>
</feature>
<feature type="binding site" evidence="1">
    <location>
        <position position="288"/>
    </location>
    <ligand>
        <name>thiamine diphosphate</name>
        <dbReference type="ChEBI" id="CHEBI:58937"/>
    </ligand>
</feature>
<feature type="binding site" evidence="1">
    <location>
        <position position="370"/>
    </location>
    <ligand>
        <name>thiamine diphosphate</name>
        <dbReference type="ChEBI" id="CHEBI:58937"/>
    </ligand>
</feature>
<evidence type="ECO:0000255" key="1">
    <source>
        <dbReference type="HAMAP-Rule" id="MF_00315"/>
    </source>
</evidence>
<keyword id="KW-0414">Isoprene biosynthesis</keyword>
<keyword id="KW-0460">Magnesium</keyword>
<keyword id="KW-0479">Metal-binding</keyword>
<keyword id="KW-0784">Thiamine biosynthesis</keyword>
<keyword id="KW-0786">Thiamine pyrophosphate</keyword>
<keyword id="KW-0808">Transferase</keyword>
<proteinExistence type="inferred from homology"/>
<protein>
    <recommendedName>
        <fullName evidence="1">1-deoxy-D-xylulose-5-phosphate synthase</fullName>
        <ecNumber evidence="1">2.2.1.7</ecNumber>
    </recommendedName>
    <alternativeName>
        <fullName evidence="1">1-deoxyxylulose-5-phosphate synthase</fullName>
        <shortName evidence="1">DXP synthase</shortName>
        <shortName evidence="1">DXPS</shortName>
    </alternativeName>
</protein>
<comment type="function">
    <text evidence="1">Catalyzes the acyloin condensation reaction between C atoms 2 and 3 of pyruvate and glyceraldehyde 3-phosphate to yield 1-deoxy-D-xylulose-5-phosphate (DXP).</text>
</comment>
<comment type="catalytic activity">
    <reaction evidence="1">
        <text>D-glyceraldehyde 3-phosphate + pyruvate + H(+) = 1-deoxy-D-xylulose 5-phosphate + CO2</text>
        <dbReference type="Rhea" id="RHEA:12605"/>
        <dbReference type="ChEBI" id="CHEBI:15361"/>
        <dbReference type="ChEBI" id="CHEBI:15378"/>
        <dbReference type="ChEBI" id="CHEBI:16526"/>
        <dbReference type="ChEBI" id="CHEBI:57792"/>
        <dbReference type="ChEBI" id="CHEBI:59776"/>
        <dbReference type="EC" id="2.2.1.7"/>
    </reaction>
</comment>
<comment type="cofactor">
    <cofactor evidence="1">
        <name>Mg(2+)</name>
        <dbReference type="ChEBI" id="CHEBI:18420"/>
    </cofactor>
    <text evidence="1">Binds 1 Mg(2+) ion per subunit.</text>
</comment>
<comment type="cofactor">
    <cofactor evidence="1">
        <name>thiamine diphosphate</name>
        <dbReference type="ChEBI" id="CHEBI:58937"/>
    </cofactor>
    <text evidence="1">Binds 1 thiamine pyrophosphate per subunit.</text>
</comment>
<comment type="pathway">
    <text evidence="1">Metabolic intermediate biosynthesis; 1-deoxy-D-xylulose 5-phosphate biosynthesis; 1-deoxy-D-xylulose 5-phosphate from D-glyceraldehyde 3-phosphate and pyruvate: step 1/1.</text>
</comment>
<comment type="subunit">
    <text evidence="1">Homodimer.</text>
</comment>
<comment type="similarity">
    <text evidence="1">Belongs to the transketolase family. DXPS subfamily.</text>
</comment>
<name>DXS_VIBA3</name>
<reference key="1">
    <citation type="submission" date="2009-02" db="EMBL/GenBank/DDBJ databases">
        <title>Vibrio splendidus str. LGP32 complete genome.</title>
        <authorList>
            <person name="Mazel D."/>
            <person name="Le Roux F."/>
        </authorList>
    </citation>
    <scope>NUCLEOTIDE SEQUENCE [LARGE SCALE GENOMIC DNA]</scope>
    <source>
        <strain>LGP32</strain>
    </source>
</reference>
<gene>
    <name evidence="1" type="primary">dxs</name>
    <name type="ordered locus">VS_2406</name>
</gene>
<accession>B7VJA1</accession>
<organism>
    <name type="scientific">Vibrio atlanticus (strain LGP32)</name>
    <name type="common">Vibrio splendidus (strain Mel32)</name>
    <dbReference type="NCBI Taxonomy" id="575788"/>
    <lineage>
        <taxon>Bacteria</taxon>
        <taxon>Pseudomonadati</taxon>
        <taxon>Pseudomonadota</taxon>
        <taxon>Gammaproteobacteria</taxon>
        <taxon>Vibrionales</taxon>
        <taxon>Vibrionaceae</taxon>
        <taxon>Vibrio</taxon>
    </lineage>
</organism>